<proteinExistence type="evidence at transcript level"/>
<reference key="1">
    <citation type="journal article" date="1989" name="J. Biol. Chem.">
        <title>The structure and characterization of type I P-450(15) alpha gene as major steroid 15 alpha-hydroxylase and its comparison with type II P-450(15) alpha gene.</title>
        <authorList>
            <person name="Lindberg R."/>
            <person name="Burkhart B."/>
            <person name="Ichikawa T."/>
            <person name="Negishi M."/>
        </authorList>
    </citation>
    <scope>NUCLEOTIDE SEQUENCE [GENOMIC DNA]</scope>
    <source>
        <tissue>Liver</tissue>
    </source>
</reference>
<reference key="2">
    <citation type="journal article" date="1988" name="J. Biol. Chem.">
        <title>Reciprocal regulation of sex-dependent expression of testosterone 15 alpha-hydroxylase (P-450(15 alpha)) in liver and kidney of male mice by androgen. Evidence for a single gene.</title>
        <authorList>
            <person name="Squires E.J."/>
            <person name="Negishi M."/>
        </authorList>
    </citation>
    <scope>NUCLEOTIDE SEQUENCE [MRNA]</scope>
</reference>
<reference key="3">
    <citation type="journal article" date="2009" name="PLoS Biol.">
        <title>Lineage-specific biology revealed by a finished genome assembly of the mouse.</title>
        <authorList>
            <person name="Church D.M."/>
            <person name="Goodstadt L."/>
            <person name="Hillier L.W."/>
            <person name="Zody M.C."/>
            <person name="Goldstein S."/>
            <person name="She X."/>
            <person name="Bult C.J."/>
            <person name="Agarwala R."/>
            <person name="Cherry J.L."/>
            <person name="DiCuccio M."/>
            <person name="Hlavina W."/>
            <person name="Kapustin Y."/>
            <person name="Meric P."/>
            <person name="Maglott D."/>
            <person name="Birtle Z."/>
            <person name="Marques A.C."/>
            <person name="Graves T."/>
            <person name="Zhou S."/>
            <person name="Teague B."/>
            <person name="Potamousis K."/>
            <person name="Churas C."/>
            <person name="Place M."/>
            <person name="Herschleb J."/>
            <person name="Runnheim R."/>
            <person name="Forrest D."/>
            <person name="Amos-Landgraf J."/>
            <person name="Schwartz D.C."/>
            <person name="Cheng Z."/>
            <person name="Lindblad-Toh K."/>
            <person name="Eichler E.E."/>
            <person name="Ponting C.P."/>
        </authorList>
    </citation>
    <scope>NUCLEOTIDE SEQUENCE [LARGE SCALE GENOMIC DNA]</scope>
    <source>
        <strain>C57BL/6J</strain>
    </source>
</reference>
<reference key="4">
    <citation type="journal article" date="2004" name="Genome Res.">
        <title>The status, quality, and expansion of the NIH full-length cDNA project: the Mammalian Gene Collection (MGC).</title>
        <authorList>
            <consortium name="The MGC Project Team"/>
        </authorList>
    </citation>
    <scope>NUCLEOTIDE SEQUENCE [LARGE SCALE MRNA]</scope>
    <source>
        <strain>FVB/N</strain>
        <tissue>Kidney</tissue>
    </source>
</reference>
<reference key="5">
    <citation type="journal article" date="1989" name="Nature">
        <title>Alteration of mouse cytochrome P450coh substrate specificity by mutation of a single amino-acid residue.</title>
        <authorList>
            <person name="Lindberg R."/>
            <person name="Negishi M."/>
        </authorList>
    </citation>
    <scope>MUTAGENESIS</scope>
</reference>
<reference key="6">
    <citation type="journal article" date="1999" name="Mol. Cell. Biol.">
        <title>Circadian expression of the steroid 15 alpha-hydroxylase (Cyp2a4) and coumarin 7-hydroxylase (Cyp2a5) genes in mouse liver is regulated by the PAR leucine zipper transcription factor DBP.</title>
        <authorList>
            <person name="Lavery D.J."/>
            <person name="Lopez-Molina L."/>
            <person name="Margueron R."/>
            <person name="Fleury-Olela F."/>
            <person name="Conquet F."/>
            <person name="Schibler U."/>
            <person name="Bonfils C."/>
        </authorList>
    </citation>
    <scope>TISSUE SPECIFICITY</scope>
</reference>
<protein>
    <recommendedName>
        <fullName>Cytochrome P450 2A4</fullName>
        <ecNumber>1.14.14.1</ecNumber>
    </recommendedName>
    <alternativeName>
        <fullName>CYPIIA4</fullName>
    </alternativeName>
    <alternativeName>
        <fullName>Cytochrome P450-15-alpha</fullName>
    </alternativeName>
    <alternativeName>
        <fullName>Cytochrome P450-IIA3.1</fullName>
    </alternativeName>
    <alternativeName>
        <fullName>Testosterone 15-alpha-hydroxylase</fullName>
    </alternativeName>
</protein>
<feature type="chain" id="PRO_0000051666" description="Cytochrome P450 2A4">
    <location>
        <begin position="1"/>
        <end position="494"/>
    </location>
</feature>
<feature type="binding site" description="axial binding residue">
    <location>
        <position position="439"/>
    </location>
    <ligand>
        <name>heme</name>
        <dbReference type="ChEBI" id="CHEBI:30413"/>
    </ligand>
    <ligandPart>
        <name>Fe</name>
        <dbReference type="ChEBI" id="CHEBI:18248"/>
    </ligandPart>
</feature>
<feature type="modified residue" description="Phosphoserine" evidence="2">
    <location>
        <position position="131"/>
    </location>
</feature>
<feature type="modified residue" description="N6-acetyllysine" evidence="3">
    <location>
        <position position="379"/>
    </location>
</feature>
<feature type="sequence conflict" description="In Ref. 1; AAA37797 and 2; AAA40426/AAA40429." evidence="5" ref="1 2">
    <original>T</original>
    <variation>A</variation>
    <location>
        <position position="86"/>
    </location>
</feature>
<feature type="sequence conflict" description="In Ref. 1; AAA37797 and 2; AAA40426/AAA40429." evidence="5" ref="1 2">
    <original>R</original>
    <variation>S</variation>
    <location>
        <position position="129"/>
    </location>
</feature>
<feature type="sequence conflict" description="In Ref. 1; AAA37797 and 2; AAA40426/AAA40429." evidence="5" ref="1 2">
    <original>T</original>
    <variation>A</variation>
    <location>
        <position position="133"/>
    </location>
</feature>
<feature type="sequence conflict" description="In Ref. 2; AAA40426/AAA40429." evidence="5" ref="2">
    <original>L</original>
    <variation>Q</variation>
    <location>
        <position position="296"/>
    </location>
</feature>
<feature type="sequence conflict" description="In Ref. 2; AAA40426/AAA40429." evidence="5" ref="2">
    <original>V</original>
    <variation>G</variation>
    <location>
        <position position="306"/>
    </location>
</feature>
<feature type="sequence conflict" description="In Ref. 1; AAA37797 and 2; AAA40426/AAA40429." evidence="5" ref="1 2">
    <original>E</original>
    <variation>A</variation>
    <location>
        <position position="467"/>
    </location>
</feature>
<gene>
    <name type="primary">Cyp2a4</name>
    <name type="synonym">Cyp2a-4</name>
</gene>
<keyword id="KW-0007">Acetylation</keyword>
<keyword id="KW-0256">Endoplasmic reticulum</keyword>
<keyword id="KW-0349">Heme</keyword>
<keyword id="KW-0408">Iron</keyword>
<keyword id="KW-0472">Membrane</keyword>
<keyword id="KW-0479">Metal-binding</keyword>
<keyword id="KW-0492">Microsome</keyword>
<keyword id="KW-0503">Monooxygenase</keyword>
<keyword id="KW-0560">Oxidoreductase</keyword>
<keyword id="KW-0597">Phosphoprotein</keyword>
<keyword id="KW-1185">Reference proteome</keyword>
<comment type="function">
    <text>Highly active in the 15-alpha-hydroxylation of testosterone. Also active in the 15-alpha-hydroxylation of progesterone and androstenedione. Little or no activity on corticosterone, pregnenolone, dehydroepiandrosterone, estradiol or estriol.</text>
</comment>
<comment type="catalytic activity">
    <reaction>
        <text>an organic molecule + reduced [NADPH--hemoprotein reductase] + O2 = an alcohol + oxidized [NADPH--hemoprotein reductase] + H2O + H(+)</text>
        <dbReference type="Rhea" id="RHEA:17149"/>
        <dbReference type="Rhea" id="RHEA-COMP:11964"/>
        <dbReference type="Rhea" id="RHEA-COMP:11965"/>
        <dbReference type="ChEBI" id="CHEBI:15377"/>
        <dbReference type="ChEBI" id="CHEBI:15378"/>
        <dbReference type="ChEBI" id="CHEBI:15379"/>
        <dbReference type="ChEBI" id="CHEBI:30879"/>
        <dbReference type="ChEBI" id="CHEBI:57618"/>
        <dbReference type="ChEBI" id="CHEBI:58210"/>
        <dbReference type="ChEBI" id="CHEBI:142491"/>
        <dbReference type="EC" id="1.14.14.1"/>
    </reaction>
</comment>
<comment type="cofactor">
    <cofactor evidence="1">
        <name>heme</name>
        <dbReference type="ChEBI" id="CHEBI:30413"/>
    </cofactor>
</comment>
<comment type="subcellular location">
    <subcellularLocation>
        <location>Endoplasmic reticulum membrane</location>
        <topology>Peripheral membrane protein</topology>
    </subcellularLocation>
    <subcellularLocation>
        <location>Microsome membrane</location>
        <topology>Peripheral membrane protein</topology>
    </subcellularLocation>
</comment>
<comment type="tissue specificity">
    <text evidence="4">Kidney and lung. Expressed in liver, with a strong circadian rhythmicity. Circadian expression is regulated by DBP.</text>
</comment>
<comment type="miscellaneous">
    <text>There are only 11 differences between the sequence of testosterone 15-alpha-hydroxylase and that of coumarin 7-hydroxylase. By site-directed mutagenesis it has been shown that modification of position 209 is sufficient to convert the specificity of the two forms of the enzyme.</text>
</comment>
<comment type="similarity">
    <text evidence="5">Belongs to the cytochrome P450 family.</text>
</comment>
<evidence type="ECO:0000250" key="1"/>
<evidence type="ECO:0000250" key="2">
    <source>
        <dbReference type="UniProtKB" id="P00176"/>
    </source>
</evidence>
<evidence type="ECO:0000250" key="3">
    <source>
        <dbReference type="UniProtKB" id="Q64458"/>
    </source>
</evidence>
<evidence type="ECO:0000269" key="4">
    <source>
    </source>
</evidence>
<evidence type="ECO:0000305" key="5"/>
<dbReference type="EC" id="1.14.14.1"/>
<dbReference type="EMBL" id="M26208">
    <property type="protein sequence ID" value="AAA37797.1"/>
    <property type="molecule type" value="Genomic_DNA"/>
</dbReference>
<dbReference type="EMBL" id="M25146">
    <property type="protein sequence ID" value="AAA37797.1"/>
    <property type="status" value="JOINED"/>
    <property type="molecule type" value="Genomic_DNA"/>
</dbReference>
<dbReference type="EMBL" id="M25147">
    <property type="protein sequence ID" value="AAA37797.1"/>
    <property type="status" value="JOINED"/>
    <property type="molecule type" value="Genomic_DNA"/>
</dbReference>
<dbReference type="EMBL" id="M26202">
    <property type="protein sequence ID" value="AAA37797.1"/>
    <property type="status" value="JOINED"/>
    <property type="molecule type" value="Genomic_DNA"/>
</dbReference>
<dbReference type="EMBL" id="M26203">
    <property type="protein sequence ID" value="AAA37797.1"/>
    <property type="status" value="JOINED"/>
    <property type="molecule type" value="Genomic_DNA"/>
</dbReference>
<dbReference type="EMBL" id="M26205">
    <property type="protein sequence ID" value="AAA37797.1"/>
    <property type="status" value="JOINED"/>
    <property type="molecule type" value="Genomic_DNA"/>
</dbReference>
<dbReference type="EMBL" id="M26206">
    <property type="protein sequence ID" value="AAA37797.1"/>
    <property type="status" value="JOINED"/>
    <property type="molecule type" value="Genomic_DNA"/>
</dbReference>
<dbReference type="EMBL" id="M26207">
    <property type="protein sequence ID" value="AAA37797.1"/>
    <property type="status" value="JOINED"/>
    <property type="molecule type" value="Genomic_DNA"/>
</dbReference>
<dbReference type="EMBL" id="J03549">
    <property type="protein sequence ID" value="AAA40426.1"/>
    <property type="molecule type" value="mRNA"/>
</dbReference>
<dbReference type="EMBL" id="M19319">
    <property type="protein sequence ID" value="AAA40429.1"/>
    <property type="molecule type" value="mRNA"/>
</dbReference>
<dbReference type="EMBL" id="AC161798">
    <property type="status" value="NOT_ANNOTATED_CDS"/>
    <property type="molecule type" value="Genomic_DNA"/>
</dbReference>
<dbReference type="EMBL" id="BC010761">
    <property type="protein sequence ID" value="AAH10761.1"/>
    <property type="molecule type" value="mRNA"/>
</dbReference>
<dbReference type="EMBL" id="BC063778">
    <property type="protein sequence ID" value="AAH63778.1"/>
    <property type="molecule type" value="mRNA"/>
</dbReference>
<dbReference type="CCDS" id="CCDS21002.1"/>
<dbReference type="PIR" id="A33531">
    <property type="entry name" value="A33531"/>
</dbReference>
<dbReference type="PIR" id="S03979">
    <property type="entry name" value="S03979"/>
</dbReference>
<dbReference type="PIR" id="S16068">
    <property type="entry name" value="S16068"/>
</dbReference>
<dbReference type="RefSeq" id="NP_034127.2">
    <property type="nucleotide sequence ID" value="NM_009997.2"/>
</dbReference>
<dbReference type="SMR" id="P15392"/>
<dbReference type="FunCoup" id="P15392">
    <property type="interactions" value="707"/>
</dbReference>
<dbReference type="IntAct" id="P15392">
    <property type="interactions" value="1"/>
</dbReference>
<dbReference type="STRING" id="10090.ENSMUSP00000096254"/>
<dbReference type="GlyGen" id="P15392">
    <property type="glycosylation" value="2 sites, 1 O-linked glycan (1 site)"/>
</dbReference>
<dbReference type="iPTMnet" id="P15392"/>
<dbReference type="PhosphoSitePlus" id="P15392"/>
<dbReference type="SwissPalm" id="P15392"/>
<dbReference type="jPOST" id="P15392"/>
<dbReference type="PaxDb" id="10090-ENSMUSP00000096254"/>
<dbReference type="PeptideAtlas" id="P15392"/>
<dbReference type="ProteomicsDB" id="283440"/>
<dbReference type="DNASU" id="13086"/>
<dbReference type="Ensembl" id="ENSMUST00000098657.5">
    <property type="protein sequence ID" value="ENSMUSP00000096254.4"/>
    <property type="gene ID" value="ENSMUSG00000074254.5"/>
</dbReference>
<dbReference type="GeneID" id="13086"/>
<dbReference type="KEGG" id="mmu:13086"/>
<dbReference type="UCSC" id="uc009fui.1">
    <property type="organism name" value="mouse"/>
</dbReference>
<dbReference type="AGR" id="MGI:88596"/>
<dbReference type="CTD" id="13086"/>
<dbReference type="MGI" id="MGI:88596">
    <property type="gene designation" value="Cyp2a4"/>
</dbReference>
<dbReference type="VEuPathDB" id="HostDB:ENSMUSG00000074254"/>
<dbReference type="eggNOG" id="KOG0156">
    <property type="taxonomic scope" value="Eukaryota"/>
</dbReference>
<dbReference type="GeneTree" id="ENSGT00940000154117"/>
<dbReference type="HOGENOM" id="CLU_001570_22_3_1"/>
<dbReference type="InParanoid" id="P15392"/>
<dbReference type="OMA" id="TEPCKVQ"/>
<dbReference type="OrthoDB" id="2789670at2759"/>
<dbReference type="PhylomeDB" id="P15392"/>
<dbReference type="TreeFam" id="TF352043"/>
<dbReference type="Reactome" id="R-MMU-211935">
    <property type="pathway name" value="Fatty acids"/>
</dbReference>
<dbReference type="Reactome" id="R-MMU-211981">
    <property type="pathway name" value="Xenobiotics"/>
</dbReference>
<dbReference type="Reactome" id="R-MMU-211999">
    <property type="pathway name" value="CYP2E1 reactions"/>
</dbReference>
<dbReference type="BioGRID-ORCS" id="13086">
    <property type="hits" value="2 hits in 46 CRISPR screens"/>
</dbReference>
<dbReference type="ChiTaRS" id="Cyp2a4">
    <property type="organism name" value="mouse"/>
</dbReference>
<dbReference type="PRO" id="PR:P15392"/>
<dbReference type="Proteomes" id="UP000000589">
    <property type="component" value="Chromosome 7"/>
</dbReference>
<dbReference type="RNAct" id="P15392">
    <property type="molecule type" value="protein"/>
</dbReference>
<dbReference type="Bgee" id="ENSMUSG00000074254">
    <property type="expression patterns" value="Expressed in proximal tubule and 26 other cell types or tissues"/>
</dbReference>
<dbReference type="GO" id="GO:0005789">
    <property type="term" value="C:endoplasmic reticulum membrane"/>
    <property type="evidence" value="ECO:0007669"/>
    <property type="project" value="UniProtKB-SubCell"/>
</dbReference>
<dbReference type="GO" id="GO:0020037">
    <property type="term" value="F:heme binding"/>
    <property type="evidence" value="ECO:0007669"/>
    <property type="project" value="InterPro"/>
</dbReference>
<dbReference type="GO" id="GO:0005506">
    <property type="term" value="F:iron ion binding"/>
    <property type="evidence" value="ECO:0007669"/>
    <property type="project" value="InterPro"/>
</dbReference>
<dbReference type="GO" id="GO:0016712">
    <property type="term" value="F:oxidoreductase activity, acting on paired donors, with incorporation or reduction of molecular oxygen, reduced flavin or flavoprotein as one donor, and incorporation of one atom of oxygen"/>
    <property type="evidence" value="ECO:0007669"/>
    <property type="project" value="UniProtKB-EC"/>
</dbReference>
<dbReference type="GO" id="GO:0035634">
    <property type="term" value="P:response to stilbenoid"/>
    <property type="evidence" value="ECO:0000270"/>
    <property type="project" value="UniProtKB"/>
</dbReference>
<dbReference type="CDD" id="cd20668">
    <property type="entry name" value="CYP2A"/>
    <property type="match status" value="1"/>
</dbReference>
<dbReference type="FunFam" id="1.10.630.10:FF:000238">
    <property type="entry name" value="Cytochrome P450 2A6"/>
    <property type="match status" value="1"/>
</dbReference>
<dbReference type="Gene3D" id="1.10.630.10">
    <property type="entry name" value="Cytochrome P450"/>
    <property type="match status" value="1"/>
</dbReference>
<dbReference type="InterPro" id="IPR001128">
    <property type="entry name" value="Cyt_P450"/>
</dbReference>
<dbReference type="InterPro" id="IPR017972">
    <property type="entry name" value="Cyt_P450_CS"/>
</dbReference>
<dbReference type="InterPro" id="IPR002401">
    <property type="entry name" value="Cyt_P450_E_grp-I"/>
</dbReference>
<dbReference type="InterPro" id="IPR008067">
    <property type="entry name" value="Cyt_P450_E_grp-I_CYP2A-like"/>
</dbReference>
<dbReference type="InterPro" id="IPR036396">
    <property type="entry name" value="Cyt_P450_sf"/>
</dbReference>
<dbReference type="InterPro" id="IPR050182">
    <property type="entry name" value="Cytochrome_P450_fam2"/>
</dbReference>
<dbReference type="PANTHER" id="PTHR24300:SF180">
    <property type="entry name" value="CYTOCHROME P450 2A6"/>
    <property type="match status" value="1"/>
</dbReference>
<dbReference type="PANTHER" id="PTHR24300">
    <property type="entry name" value="CYTOCHROME P450 508A4-RELATED"/>
    <property type="match status" value="1"/>
</dbReference>
<dbReference type="Pfam" id="PF00067">
    <property type="entry name" value="p450"/>
    <property type="match status" value="1"/>
</dbReference>
<dbReference type="PRINTS" id="PR00463">
    <property type="entry name" value="EP450I"/>
</dbReference>
<dbReference type="PRINTS" id="PR01684">
    <property type="entry name" value="EP450ICYP2A"/>
</dbReference>
<dbReference type="PRINTS" id="PR00385">
    <property type="entry name" value="P450"/>
</dbReference>
<dbReference type="SUPFAM" id="SSF48264">
    <property type="entry name" value="Cytochrome P450"/>
    <property type="match status" value="1"/>
</dbReference>
<dbReference type="PROSITE" id="PS00086">
    <property type="entry name" value="CYTOCHROME_P450"/>
    <property type="match status" value="1"/>
</dbReference>
<name>CP2A4_MOUSE</name>
<sequence length="494" mass="56782">MLTSGLLLVAAVAFLSVLVLMSVWKQRKLSGKLPPGPTPLPFVGNFLQLNTEQMYNSLMKISQRYGPVFTIYLGSRRIVVLCGQETVKEALVDQAEEFSGRGEQATFDWLFKGYGIAFSSGERAKQLRRFSITTLRDFGVGKRGIEERIQEEAGFLIDSFRKTNGAFIDPTFYLSRTVSNVISSIVFGDRFDYEDKEFLSLLRMMLGSLQFTATSMGQVYEMFSSVMKHLPGPQQQAFKELQGLEDFITKKVEHNQRTLDPNSPRDFIDSFLIRMLEEKKNPNTEFYMKNLVLTTLNLFFAGTETVSTTLRYGFLLLMKYPDIEAKVHEEIDRVIGRNRQPKYEDRMKMPYTEAVIHEIQRFADLIPMGLARRVTKDTKFRDFLLPKGTEVFPMLGSVLKDPKFFSNPKDFNPKHFLDDKGQFKKSDAFVPFSIGKRYCFGEGLARMELFLFLTNIMQNFHFKSTQEPQDIDVSPRLVGFVTIPPTYTMSFLSR</sequence>
<organism>
    <name type="scientific">Mus musculus</name>
    <name type="common">Mouse</name>
    <dbReference type="NCBI Taxonomy" id="10090"/>
    <lineage>
        <taxon>Eukaryota</taxon>
        <taxon>Metazoa</taxon>
        <taxon>Chordata</taxon>
        <taxon>Craniata</taxon>
        <taxon>Vertebrata</taxon>
        <taxon>Euteleostomi</taxon>
        <taxon>Mammalia</taxon>
        <taxon>Eutheria</taxon>
        <taxon>Euarchontoglires</taxon>
        <taxon>Glires</taxon>
        <taxon>Rodentia</taxon>
        <taxon>Myomorpha</taxon>
        <taxon>Muroidea</taxon>
        <taxon>Muridae</taxon>
        <taxon>Murinae</taxon>
        <taxon>Mus</taxon>
        <taxon>Mus</taxon>
    </lineage>
</organism>
<accession>P15392</accession>
<accession>Q91XG2</accession>